<reference key="1">
    <citation type="journal article" date="1995" name="Plant Mol. Biol. Rep.">
        <title>Complete nucleotide sequence of the Porphyra purpurea chloroplast genome.</title>
        <authorList>
            <person name="Reith M.E."/>
            <person name="Munholland J."/>
        </authorList>
    </citation>
    <scope>NUCLEOTIDE SEQUENCE [LARGE SCALE GENOMIC DNA]</scope>
    <source>
        <strain>Avonport</strain>
    </source>
</reference>
<comment type="catalytic activity">
    <reaction>
        <text>ATP + protein L-histidine = ADP + protein N-phospho-L-histidine.</text>
        <dbReference type="EC" id="2.7.13.3"/>
    </reaction>
</comment>
<comment type="subcellular location">
    <subcellularLocation>
        <location evidence="5">Plastid</location>
        <location evidence="5">Chloroplast membrane</location>
        <topology evidence="5">Multi-pass membrane protein</topology>
    </subcellularLocation>
</comment>
<sequence>MFSFRNQQVLTFVSSLSTFVTIILNHLKKWWSDVTLRTRLMAMTTLMVSLLMSSLTFWTLTSIQQETRLIDNRFGKDLSLLLAVNITPILEGDNYLQLQQFIEHFYLSTSSIRYILVFNADGQIYYSIPFSSETAINFFSLSEYNCFRNENHYFSNTPIVNTNNRLQGEVIDIIIPLSKEKKLLGILNIGINSNPTLTTSSQLTRDVSVAVFISIWLMVILGAAFNAFTITRPIRELLTGVKNIASGDFYQRIDLPFGGELGALIFNFNEMAERLEKYEQQNVEKLTSEKAKLETLVSTIADGAILLDKDLRVILVNRTAIENFGWEGKNIAGSIIVDYLPEDINQQLFPILNDIIRKNFLEQSICETQEICIKLQKNYKKTFRVLLTTVLDHKYSILKGIAMTIQDRTQEVELNEIKNQFISNVSHELRTPLFNIRSFLETLYEYHDSLDDSQKLEFLAIANKETGRLTRLVNDVLDLSRLESDQEYTLQPTDLVSAVEQTIRTYQLSAKDKRIDLHIDIEQNLQCVLGNYNLILQILANLVVNSLKFTHPNGIIILRAYTVDDLKTETEVQHFNSQKVRVEICDNGIGISRKNQERIFARFLRIENYVHTLEGTGLGLSIVKNIIQKHNSEIHLYSELKNGSCFFFDLMIAKDE</sequence>
<organism>
    <name type="scientific">Porphyra purpurea</name>
    <name type="common">Red seaweed</name>
    <name type="synonym">Ulva purpurea</name>
    <dbReference type="NCBI Taxonomy" id="2787"/>
    <lineage>
        <taxon>Eukaryota</taxon>
        <taxon>Rhodophyta</taxon>
        <taxon>Bangiophyceae</taxon>
        <taxon>Bangiales</taxon>
        <taxon>Bangiaceae</taxon>
        <taxon>Porphyra</taxon>
    </lineage>
</organism>
<proteinExistence type="inferred from homology"/>
<name>YCF26_PORPU</name>
<protein>
    <recommendedName>
        <fullName>Uncharacterized sensor-like histidine kinase ycf26</fullName>
        <ecNumber>2.7.13.3</ecNumber>
    </recommendedName>
</protein>
<dbReference type="EC" id="2.7.13.3"/>
<dbReference type="EMBL" id="U38804">
    <property type="protein sequence ID" value="AAC08278.1"/>
    <property type="molecule type" value="Genomic_DNA"/>
</dbReference>
<dbReference type="PIR" id="S73313">
    <property type="entry name" value="S73313"/>
</dbReference>
<dbReference type="RefSeq" id="NP_054002.1">
    <property type="nucleotide sequence ID" value="NC_000925.1"/>
</dbReference>
<dbReference type="SMR" id="P51392"/>
<dbReference type="GeneID" id="810033"/>
<dbReference type="GO" id="GO:0031969">
    <property type="term" value="C:chloroplast membrane"/>
    <property type="evidence" value="ECO:0007669"/>
    <property type="project" value="UniProtKB-SubCell"/>
</dbReference>
<dbReference type="GO" id="GO:0005524">
    <property type="term" value="F:ATP binding"/>
    <property type="evidence" value="ECO:0007669"/>
    <property type="project" value="UniProtKB-KW"/>
</dbReference>
<dbReference type="GO" id="GO:0000156">
    <property type="term" value="F:phosphorelay response regulator activity"/>
    <property type="evidence" value="ECO:0007669"/>
    <property type="project" value="TreeGrafter"/>
</dbReference>
<dbReference type="GO" id="GO:0000155">
    <property type="term" value="F:phosphorelay sensor kinase activity"/>
    <property type="evidence" value="ECO:0007669"/>
    <property type="project" value="InterPro"/>
</dbReference>
<dbReference type="GO" id="GO:0030295">
    <property type="term" value="F:protein kinase activator activity"/>
    <property type="evidence" value="ECO:0007669"/>
    <property type="project" value="TreeGrafter"/>
</dbReference>
<dbReference type="GO" id="GO:0007234">
    <property type="term" value="P:osmosensory signaling via phosphorelay pathway"/>
    <property type="evidence" value="ECO:0007669"/>
    <property type="project" value="TreeGrafter"/>
</dbReference>
<dbReference type="GO" id="GO:0006355">
    <property type="term" value="P:regulation of DNA-templated transcription"/>
    <property type="evidence" value="ECO:0007669"/>
    <property type="project" value="InterPro"/>
</dbReference>
<dbReference type="CDD" id="cd06225">
    <property type="entry name" value="HAMP"/>
    <property type="match status" value="1"/>
</dbReference>
<dbReference type="CDD" id="cd00082">
    <property type="entry name" value="HisKA"/>
    <property type="match status" value="1"/>
</dbReference>
<dbReference type="CDD" id="cd00130">
    <property type="entry name" value="PAS"/>
    <property type="match status" value="1"/>
</dbReference>
<dbReference type="FunFam" id="1.10.287.130:FF:000001">
    <property type="entry name" value="Two-component sensor histidine kinase"/>
    <property type="match status" value="1"/>
</dbReference>
<dbReference type="Gene3D" id="1.10.287.130">
    <property type="match status" value="1"/>
</dbReference>
<dbReference type="Gene3D" id="6.10.340.10">
    <property type="match status" value="1"/>
</dbReference>
<dbReference type="Gene3D" id="3.30.565.10">
    <property type="entry name" value="Histidine kinase-like ATPase, C-terminal domain"/>
    <property type="match status" value="1"/>
</dbReference>
<dbReference type="Gene3D" id="3.30.450.20">
    <property type="entry name" value="PAS domain"/>
    <property type="match status" value="1"/>
</dbReference>
<dbReference type="InterPro" id="IPR003660">
    <property type="entry name" value="HAMP_dom"/>
</dbReference>
<dbReference type="InterPro" id="IPR036890">
    <property type="entry name" value="HATPase_C_sf"/>
</dbReference>
<dbReference type="InterPro" id="IPR005467">
    <property type="entry name" value="His_kinase_dom"/>
</dbReference>
<dbReference type="InterPro" id="IPR003661">
    <property type="entry name" value="HisK_dim/P_dom"/>
</dbReference>
<dbReference type="InterPro" id="IPR036097">
    <property type="entry name" value="HisK_dim/P_sf"/>
</dbReference>
<dbReference type="InterPro" id="IPR052545">
    <property type="entry name" value="Light-responsive_reg"/>
</dbReference>
<dbReference type="InterPro" id="IPR000014">
    <property type="entry name" value="PAS"/>
</dbReference>
<dbReference type="InterPro" id="IPR035965">
    <property type="entry name" value="PAS-like_dom_sf"/>
</dbReference>
<dbReference type="InterPro" id="IPR013767">
    <property type="entry name" value="PAS_fold"/>
</dbReference>
<dbReference type="InterPro" id="IPR004358">
    <property type="entry name" value="Sig_transdc_His_kin-like_C"/>
</dbReference>
<dbReference type="PANTHER" id="PTHR42878:SF7">
    <property type="entry name" value="SENSOR HISTIDINE KINASE GLRK"/>
    <property type="match status" value="1"/>
</dbReference>
<dbReference type="PANTHER" id="PTHR42878">
    <property type="entry name" value="TWO-COMPONENT HISTIDINE KINASE"/>
    <property type="match status" value="1"/>
</dbReference>
<dbReference type="Pfam" id="PF00672">
    <property type="entry name" value="HAMP"/>
    <property type="match status" value="1"/>
</dbReference>
<dbReference type="Pfam" id="PF02518">
    <property type="entry name" value="HATPase_c"/>
    <property type="match status" value="1"/>
</dbReference>
<dbReference type="Pfam" id="PF00512">
    <property type="entry name" value="HisKA"/>
    <property type="match status" value="1"/>
</dbReference>
<dbReference type="Pfam" id="PF00989">
    <property type="entry name" value="PAS"/>
    <property type="match status" value="1"/>
</dbReference>
<dbReference type="PRINTS" id="PR00344">
    <property type="entry name" value="BCTRLSENSOR"/>
</dbReference>
<dbReference type="SMART" id="SM00304">
    <property type="entry name" value="HAMP"/>
    <property type="match status" value="1"/>
</dbReference>
<dbReference type="SMART" id="SM00387">
    <property type="entry name" value="HATPase_c"/>
    <property type="match status" value="1"/>
</dbReference>
<dbReference type="SMART" id="SM00388">
    <property type="entry name" value="HisKA"/>
    <property type="match status" value="1"/>
</dbReference>
<dbReference type="SMART" id="SM00091">
    <property type="entry name" value="PAS"/>
    <property type="match status" value="1"/>
</dbReference>
<dbReference type="SUPFAM" id="SSF55874">
    <property type="entry name" value="ATPase domain of HSP90 chaperone/DNA topoisomerase II/histidine kinase"/>
    <property type="match status" value="1"/>
</dbReference>
<dbReference type="SUPFAM" id="SSF158472">
    <property type="entry name" value="HAMP domain-like"/>
    <property type="match status" value="1"/>
</dbReference>
<dbReference type="SUPFAM" id="SSF47384">
    <property type="entry name" value="Homodimeric domain of signal transducing histidine kinase"/>
    <property type="match status" value="1"/>
</dbReference>
<dbReference type="SUPFAM" id="SSF55785">
    <property type="entry name" value="PYP-like sensor domain (PAS domain)"/>
    <property type="match status" value="1"/>
</dbReference>
<dbReference type="PROSITE" id="PS50885">
    <property type="entry name" value="HAMP"/>
    <property type="match status" value="1"/>
</dbReference>
<dbReference type="PROSITE" id="PS50109">
    <property type="entry name" value="HIS_KIN"/>
    <property type="match status" value="1"/>
</dbReference>
<dbReference type="PROSITE" id="PS50112">
    <property type="entry name" value="PAS"/>
    <property type="match status" value="1"/>
</dbReference>
<keyword id="KW-0067">ATP-binding</keyword>
<keyword id="KW-0150">Chloroplast</keyword>
<keyword id="KW-0418">Kinase</keyword>
<keyword id="KW-0472">Membrane</keyword>
<keyword id="KW-0547">Nucleotide-binding</keyword>
<keyword id="KW-0597">Phosphoprotein</keyword>
<keyword id="KW-0934">Plastid</keyword>
<keyword id="KW-0808">Transferase</keyword>
<keyword id="KW-0812">Transmembrane</keyword>
<keyword id="KW-1133">Transmembrane helix</keyword>
<keyword id="KW-0902">Two-component regulatory system</keyword>
<accession>P51392</accession>
<gene>
    <name type="primary">ycf26</name>
</gene>
<feature type="chain" id="PRO_0000074926" description="Uncharacterized sensor-like histidine kinase ycf26">
    <location>
        <begin position="1"/>
        <end position="656"/>
    </location>
</feature>
<feature type="transmembrane region" description="Helical" evidence="1">
    <location>
        <begin position="7"/>
        <end position="27"/>
    </location>
</feature>
<feature type="transmembrane region" description="Helical" evidence="1">
    <location>
        <begin position="40"/>
        <end position="60"/>
    </location>
</feature>
<feature type="transmembrane region" description="Helical" evidence="1">
    <location>
        <begin position="210"/>
        <end position="230"/>
    </location>
</feature>
<feature type="domain" description="HAMP" evidence="2">
    <location>
        <begin position="231"/>
        <end position="280"/>
    </location>
</feature>
<feature type="domain" description="PAS" evidence="4">
    <location>
        <begin position="289"/>
        <end position="359"/>
    </location>
</feature>
<feature type="domain" description="Histidine kinase" evidence="3">
    <location>
        <begin position="424"/>
        <end position="654"/>
    </location>
</feature>
<feature type="modified residue" description="Phosphohistidine; by autocatalysis" evidence="3">
    <location>
        <position position="427"/>
    </location>
</feature>
<evidence type="ECO:0000255" key="1"/>
<evidence type="ECO:0000255" key="2">
    <source>
        <dbReference type="PROSITE-ProRule" id="PRU00102"/>
    </source>
</evidence>
<evidence type="ECO:0000255" key="3">
    <source>
        <dbReference type="PROSITE-ProRule" id="PRU00107"/>
    </source>
</evidence>
<evidence type="ECO:0000255" key="4">
    <source>
        <dbReference type="PROSITE-ProRule" id="PRU00140"/>
    </source>
</evidence>
<evidence type="ECO:0000305" key="5"/>
<geneLocation type="chloroplast"/>